<proteinExistence type="inferred from homology"/>
<protein>
    <recommendedName>
        <fullName evidence="1">Large ribosomal subunit protein uL4</fullName>
    </recommendedName>
    <alternativeName>
        <fullName evidence="3">50S ribosomal protein L4</fullName>
    </alternativeName>
</protein>
<name>RL4_LACLA</name>
<organism>
    <name type="scientific">Lactococcus lactis subsp. lactis (strain IL1403)</name>
    <name type="common">Streptococcus lactis</name>
    <dbReference type="NCBI Taxonomy" id="272623"/>
    <lineage>
        <taxon>Bacteria</taxon>
        <taxon>Bacillati</taxon>
        <taxon>Bacillota</taxon>
        <taxon>Bacilli</taxon>
        <taxon>Lactobacillales</taxon>
        <taxon>Streptococcaceae</taxon>
        <taxon>Lactococcus</taxon>
    </lineage>
</organism>
<feature type="chain" id="PRO_0000129228" description="Large ribosomal subunit protein uL4">
    <location>
        <begin position="1"/>
        <end position="208"/>
    </location>
</feature>
<feature type="region of interest" description="Disordered" evidence="2">
    <location>
        <begin position="45"/>
        <end position="89"/>
    </location>
</feature>
<accession>Q9CDW3</accession>
<comment type="function">
    <text evidence="1">One of the primary rRNA binding proteins, this protein initially binds near the 5'-end of the 23S rRNA. It is important during the early stages of 50S assembly. It makes multiple contacts with different domains of the 23S rRNA in the assembled 50S subunit and ribosome.</text>
</comment>
<comment type="function">
    <text evidence="1">Forms part of the polypeptide exit tunnel.</text>
</comment>
<comment type="subunit">
    <text evidence="1">Part of the 50S ribosomal subunit.</text>
</comment>
<comment type="similarity">
    <text evidence="1">Belongs to the universal ribosomal protein uL4 family.</text>
</comment>
<evidence type="ECO:0000255" key="1">
    <source>
        <dbReference type="HAMAP-Rule" id="MF_01328"/>
    </source>
</evidence>
<evidence type="ECO:0000256" key="2">
    <source>
        <dbReference type="SAM" id="MobiDB-lite"/>
    </source>
</evidence>
<evidence type="ECO:0000305" key="3"/>
<dbReference type="EMBL" id="AE005176">
    <property type="protein sequence ID" value="AAK06196.1"/>
    <property type="molecule type" value="Genomic_DNA"/>
</dbReference>
<dbReference type="PIR" id="B86887">
    <property type="entry name" value="B86887"/>
</dbReference>
<dbReference type="RefSeq" id="NP_268255.1">
    <property type="nucleotide sequence ID" value="NC_002662.1"/>
</dbReference>
<dbReference type="RefSeq" id="WP_003129968.1">
    <property type="nucleotide sequence ID" value="NC_002662.1"/>
</dbReference>
<dbReference type="SMR" id="Q9CDW3"/>
<dbReference type="PaxDb" id="272623-L0402"/>
<dbReference type="EnsemblBacteria" id="AAK06196">
    <property type="protein sequence ID" value="AAK06196"/>
    <property type="gene ID" value="L0402"/>
</dbReference>
<dbReference type="GeneID" id="89634445"/>
<dbReference type="KEGG" id="lla:L0402"/>
<dbReference type="PATRIC" id="fig|272623.7.peg.2257"/>
<dbReference type="eggNOG" id="COG0088">
    <property type="taxonomic scope" value="Bacteria"/>
</dbReference>
<dbReference type="HOGENOM" id="CLU_041575_5_2_9"/>
<dbReference type="OrthoDB" id="9803201at2"/>
<dbReference type="Proteomes" id="UP000002196">
    <property type="component" value="Chromosome"/>
</dbReference>
<dbReference type="GO" id="GO:1990904">
    <property type="term" value="C:ribonucleoprotein complex"/>
    <property type="evidence" value="ECO:0007669"/>
    <property type="project" value="UniProtKB-KW"/>
</dbReference>
<dbReference type="GO" id="GO:0005840">
    <property type="term" value="C:ribosome"/>
    <property type="evidence" value="ECO:0007669"/>
    <property type="project" value="UniProtKB-KW"/>
</dbReference>
<dbReference type="GO" id="GO:0019843">
    <property type="term" value="F:rRNA binding"/>
    <property type="evidence" value="ECO:0007669"/>
    <property type="project" value="UniProtKB-UniRule"/>
</dbReference>
<dbReference type="GO" id="GO:0003735">
    <property type="term" value="F:structural constituent of ribosome"/>
    <property type="evidence" value="ECO:0007669"/>
    <property type="project" value="InterPro"/>
</dbReference>
<dbReference type="GO" id="GO:0006412">
    <property type="term" value="P:translation"/>
    <property type="evidence" value="ECO:0007669"/>
    <property type="project" value="UniProtKB-UniRule"/>
</dbReference>
<dbReference type="FunFam" id="3.40.1370.10:FF:000003">
    <property type="entry name" value="50S ribosomal protein L4"/>
    <property type="match status" value="1"/>
</dbReference>
<dbReference type="Gene3D" id="3.40.1370.10">
    <property type="match status" value="1"/>
</dbReference>
<dbReference type="HAMAP" id="MF_01328_B">
    <property type="entry name" value="Ribosomal_uL4_B"/>
    <property type="match status" value="1"/>
</dbReference>
<dbReference type="InterPro" id="IPR002136">
    <property type="entry name" value="Ribosomal_uL4"/>
</dbReference>
<dbReference type="InterPro" id="IPR013005">
    <property type="entry name" value="Ribosomal_uL4-like"/>
</dbReference>
<dbReference type="InterPro" id="IPR023574">
    <property type="entry name" value="Ribosomal_uL4_dom_sf"/>
</dbReference>
<dbReference type="NCBIfam" id="TIGR03953">
    <property type="entry name" value="rplD_bact"/>
    <property type="match status" value="1"/>
</dbReference>
<dbReference type="PANTHER" id="PTHR10746">
    <property type="entry name" value="50S RIBOSOMAL PROTEIN L4"/>
    <property type="match status" value="1"/>
</dbReference>
<dbReference type="PANTHER" id="PTHR10746:SF6">
    <property type="entry name" value="LARGE RIBOSOMAL SUBUNIT PROTEIN UL4M"/>
    <property type="match status" value="1"/>
</dbReference>
<dbReference type="Pfam" id="PF00573">
    <property type="entry name" value="Ribosomal_L4"/>
    <property type="match status" value="1"/>
</dbReference>
<dbReference type="SUPFAM" id="SSF52166">
    <property type="entry name" value="Ribosomal protein L4"/>
    <property type="match status" value="1"/>
</dbReference>
<keyword id="KW-1185">Reference proteome</keyword>
<keyword id="KW-0687">Ribonucleoprotein</keyword>
<keyword id="KW-0689">Ribosomal protein</keyword>
<keyword id="KW-0694">RNA-binding</keyword>
<keyword id="KW-0699">rRNA-binding</keyword>
<gene>
    <name evidence="1" type="primary">rplD</name>
    <name type="ordered locus">LL2098</name>
    <name type="ORF">L0402</name>
</gene>
<sequence>MAKVSLFKQDGSQAGEVTLNDSVFGIEPNESVVFDVVISQRASLRQGTHAHKNRSAVSGGGKKPWRQKGTGRARQGSTRSPQWRGGGTVFGPNPRSYAYKLPQKVRQLALKSVYSTKVADGKLIAVDTLDFTAPKTAEFAKVISALSIERKVLVVLPNEGNEFAELSARNLANVKVTTANSASVLDIVSADKLLVVQSALTQIEEVLA</sequence>
<reference key="1">
    <citation type="journal article" date="2001" name="Genome Res.">
        <title>The complete genome sequence of the lactic acid bacterium Lactococcus lactis ssp. lactis IL1403.</title>
        <authorList>
            <person name="Bolotin A."/>
            <person name="Wincker P."/>
            <person name="Mauger S."/>
            <person name="Jaillon O."/>
            <person name="Malarme K."/>
            <person name="Weissenbach J."/>
            <person name="Ehrlich S.D."/>
            <person name="Sorokin A."/>
        </authorList>
    </citation>
    <scope>NUCLEOTIDE SEQUENCE [LARGE SCALE GENOMIC DNA]</scope>
    <source>
        <strain>IL1403</strain>
    </source>
</reference>